<protein>
    <recommendedName>
        <fullName evidence="7">K(+) efflux antiporter 5</fullName>
        <shortName evidence="7">AtKEA5</shortName>
    </recommendedName>
</protein>
<accession>Q8VYR9</accession>
<accession>Q9FLI8</accession>
<reference key="1">
    <citation type="journal article" date="1998" name="DNA Res.">
        <title>Structural analysis of Arabidopsis thaliana chromosome 5. IV. Sequence features of the regions of 1,456,315 bp covered by nineteen physically assigned P1 and TAC clones.</title>
        <authorList>
            <person name="Sato S."/>
            <person name="Kaneko T."/>
            <person name="Kotani H."/>
            <person name="Nakamura Y."/>
            <person name="Asamizu E."/>
            <person name="Miyajima N."/>
            <person name="Tabata S."/>
        </authorList>
    </citation>
    <scope>NUCLEOTIDE SEQUENCE [LARGE SCALE GENOMIC DNA]</scope>
    <source>
        <strain>cv. Columbia</strain>
    </source>
</reference>
<reference key="2">
    <citation type="journal article" date="2017" name="Plant J.">
        <title>Araport11: a complete reannotation of the Arabidopsis thaliana reference genome.</title>
        <authorList>
            <person name="Cheng C.Y."/>
            <person name="Krishnakumar V."/>
            <person name="Chan A.P."/>
            <person name="Thibaud-Nissen F."/>
            <person name="Schobel S."/>
            <person name="Town C.D."/>
        </authorList>
    </citation>
    <scope>GENOME REANNOTATION</scope>
    <source>
        <strain>cv. Columbia</strain>
    </source>
</reference>
<reference key="3">
    <citation type="journal article" date="2003" name="Science">
        <title>Empirical analysis of transcriptional activity in the Arabidopsis genome.</title>
        <authorList>
            <person name="Yamada K."/>
            <person name="Lim J."/>
            <person name="Dale J.M."/>
            <person name="Chen H."/>
            <person name="Shinn P."/>
            <person name="Palm C.J."/>
            <person name="Southwick A.M."/>
            <person name="Wu H.C."/>
            <person name="Kim C.J."/>
            <person name="Nguyen M."/>
            <person name="Pham P.K."/>
            <person name="Cheuk R.F."/>
            <person name="Karlin-Newmann G."/>
            <person name="Liu S.X."/>
            <person name="Lam B."/>
            <person name="Sakano H."/>
            <person name="Wu T."/>
            <person name="Yu G."/>
            <person name="Miranda M."/>
            <person name="Quach H.L."/>
            <person name="Tripp M."/>
            <person name="Chang C.H."/>
            <person name="Lee J.M."/>
            <person name="Toriumi M.J."/>
            <person name="Chan M.M."/>
            <person name="Tang C.C."/>
            <person name="Onodera C.S."/>
            <person name="Deng J.M."/>
            <person name="Akiyama K."/>
            <person name="Ansari Y."/>
            <person name="Arakawa T."/>
            <person name="Banh J."/>
            <person name="Banno F."/>
            <person name="Bowser L."/>
            <person name="Brooks S.Y."/>
            <person name="Carninci P."/>
            <person name="Chao Q."/>
            <person name="Choy N."/>
            <person name="Enju A."/>
            <person name="Goldsmith A.D."/>
            <person name="Gurjal M."/>
            <person name="Hansen N.F."/>
            <person name="Hayashizaki Y."/>
            <person name="Johnson-Hopson C."/>
            <person name="Hsuan V.W."/>
            <person name="Iida K."/>
            <person name="Karnes M."/>
            <person name="Khan S."/>
            <person name="Koesema E."/>
            <person name="Ishida J."/>
            <person name="Jiang P.X."/>
            <person name="Jones T."/>
            <person name="Kawai J."/>
            <person name="Kamiya A."/>
            <person name="Meyers C."/>
            <person name="Nakajima M."/>
            <person name="Narusaka M."/>
            <person name="Seki M."/>
            <person name="Sakurai T."/>
            <person name="Satou M."/>
            <person name="Tamse R."/>
            <person name="Vaysberg M."/>
            <person name="Wallender E.K."/>
            <person name="Wong C."/>
            <person name="Yamamura Y."/>
            <person name="Yuan S."/>
            <person name="Shinozaki K."/>
            <person name="Davis R.W."/>
            <person name="Theologis A."/>
            <person name="Ecker J.R."/>
        </authorList>
    </citation>
    <scope>NUCLEOTIDE SEQUENCE [LARGE SCALE MRNA]</scope>
    <source>
        <strain>cv. Columbia</strain>
    </source>
</reference>
<reference key="4">
    <citation type="submission" date="2002-03" db="EMBL/GenBank/DDBJ databases">
        <title>Full-length cDNA from Arabidopsis thaliana.</title>
        <authorList>
            <person name="Brover V.V."/>
            <person name="Troukhan M.E."/>
            <person name="Alexandrov N.A."/>
            <person name="Lu Y.-P."/>
            <person name="Flavell R.B."/>
            <person name="Feldmann K.A."/>
        </authorList>
    </citation>
    <scope>NUCLEOTIDE SEQUENCE [LARGE SCALE MRNA]</scope>
</reference>
<reference key="5">
    <citation type="journal article" date="2001" name="Plant Physiol.">
        <title>Phylogenetic relationships within cation transporter families of Arabidopsis.</title>
        <authorList>
            <person name="Maeser P."/>
            <person name="Thomine S."/>
            <person name="Schroeder J.I."/>
            <person name="Ward J.M."/>
            <person name="Hirschi K."/>
            <person name="Sze H."/>
            <person name="Talke I.N."/>
            <person name="Amtmann A."/>
            <person name="Maathuis F.J.M."/>
            <person name="Sanders D."/>
            <person name="Harper J.F."/>
            <person name="Tchieu J."/>
            <person name="Gribskov M."/>
            <person name="Persans M.W."/>
            <person name="Salt D.E."/>
            <person name="Kim S.A."/>
            <person name="Guerinot M.L."/>
        </authorList>
    </citation>
    <scope>GENE FAMILY</scope>
    <scope>NOMENCLATURE</scope>
</reference>
<reference key="6">
    <citation type="journal article" date="2013" name="PLoS ONE">
        <title>A novel AtKEA gene family, homolog of bacterial K+/H+ antiporters, plays potential roles in K+ homeostasis and osmotic adjustment in Arabidopsis.</title>
        <authorList>
            <person name="Zheng S."/>
            <person name="Pan T."/>
            <person name="Fan L."/>
            <person name="Qiu Q.S."/>
        </authorList>
    </citation>
    <scope>FUNCTION</scope>
    <scope>GENE FAMILY</scope>
    <scope>TISSUE SPECIFICITY</scope>
    <scope>INDUCTION</scope>
    <scope>TRANSPORTER ACTIVITY</scope>
    <scope>BIOPHYSICOCHEMICAL PROPERTIES</scope>
</reference>
<reference key="7">
    <citation type="journal article" date="2018" name="Plant Physiol.">
        <title>K+ efflux antiporters 4, 5, and 6 mediate pH and K+ homeostasis in endomembrane compartments.</title>
        <authorList>
            <person name="Zhu X."/>
            <person name="Pan T."/>
            <person name="Zhang X."/>
            <person name="Fan L."/>
            <person name="Quintero F.J."/>
            <person name="Zhao H."/>
            <person name="Su X."/>
            <person name="Li X."/>
            <person name="Villalta I."/>
            <person name="Mendoza I."/>
            <person name="Shen J."/>
            <person name="Jiang L."/>
            <person name="Pardo J.M."/>
            <person name="Qiu Q.-S."/>
        </authorList>
    </citation>
    <scope>FUNCTION</scope>
    <scope>DISRUPTION PHENOTYPE</scope>
    <scope>TRANSPORTER ACTIVITY</scope>
    <scope>TISSUE SPECIFICITY</scope>
    <scope>DEVELOPMENTAL STAGE</scope>
    <scope>SUBCELLULAR LOCATION</scope>
    <source>
        <strain>cv. Columbia</strain>
    </source>
</reference>
<reference key="8">
    <citation type="journal article" date="2019" name="Plant Cell Environ.">
        <title>Golgi-localized cation/proton exchangers regulate ionic homeostasis and skotomorphogenesis in Arabidopsis.</title>
        <authorList>
            <person name="Wang Y."/>
            <person name="Tang R.-J."/>
            <person name="Yang X."/>
            <person name="Zheng X."/>
            <person name="Shao Q."/>
            <person name="Tang Q.-L."/>
            <person name="Fu A."/>
            <person name="Luan S."/>
        </authorList>
    </citation>
    <scope>FUNCTION</scope>
    <scope>DISRUPTION PHENOTYPE</scope>
    <scope>SUBCELLULAR LOCATION</scope>
    <scope>TISSUE SPECIFICITY</scope>
    <source>
        <strain>cv. Columbia</strain>
    </source>
</reference>
<reference key="9">
    <citation type="journal article" date="2019" name="Sci. Rep.">
        <title>Evidence for potassium transport activity of Arabidopsis KEA1-KEA6.</title>
        <authorList>
            <person name="Tsujii M."/>
            <person name="Kera K."/>
            <person name="Hamamoto S."/>
            <person name="Kuromori T."/>
            <person name="Shikanai T."/>
            <person name="Uozumi N."/>
        </authorList>
    </citation>
    <scope>FUNCTION</scope>
    <scope>TRANSPORTER ACTIVITY</scope>
    <scope>GENE FAMILY</scope>
    <scope>NOMENCLATURE</scope>
    <source>
        <strain>cv. Columbia</strain>
    </source>
</reference>
<sequence length="568" mass="61598">MARFAVIGLTFLLLLGTSLSARSDEETRERFYGNVVNSTAPGNGEGSIAKMFDRVLEKEFSENDSPEGSDGASFNSSVADQQAEIETVAKVTHEKGKRNDTQENNGTRPFQLQDVFSLENEDSDDMTLIDKKNNVFVMSNKKSKYPILQVDLRLISDLVVIIVFAAIGGIVFSCLGQPVIVGYLLAGSIIGPGGLKFISEMVQVETVAQFGVVFLLFALGLEFSMTKLKVVGPVAVLGGLLQIVLLMFLCGVTALLCGARLSEGIFVGAFLSMSSTAVVVKFLVERNSTSSLHGQVTIGILIFQDCVVGLLFALLPVLGGNSGLLQGIISMGKLLLILSIYLTVASLLTWSFVPRFLKLMIQLSSQTNELYQLAAVAFCLLSAWCSDKLGLSLELGSFVAGVMLSTTEFAQHTLEQVEPIRNLFAALFLSSIGMLINVHFLWNHVDILLASVILVIVIKTAIAAVVVKAFRYNMRISFHVGVLLAQIGEFAFVLLSRASNLHVIEGKMYLLLLGTTALSLVTTPLLFKLIPSAMNLGVLLRWFPSENSSPNESLQEKASLIEVHNRTK</sequence>
<proteinExistence type="evidence at protein level"/>
<keyword id="KW-0025">Alternative splicing</keyword>
<keyword id="KW-0050">Antiport</keyword>
<keyword id="KW-0333">Golgi apparatus</keyword>
<keyword id="KW-0406">Ion transport</keyword>
<keyword id="KW-0472">Membrane</keyword>
<keyword id="KW-0630">Potassium</keyword>
<keyword id="KW-0633">Potassium transport</keyword>
<keyword id="KW-1185">Reference proteome</keyword>
<keyword id="KW-0732">Signal</keyword>
<keyword id="KW-0812">Transmembrane</keyword>
<keyword id="KW-1133">Transmembrane helix</keyword>
<keyword id="KW-0813">Transport</keyword>
<gene>
    <name evidence="7 8" type="primary">KEA5</name>
    <name evidence="10" type="ordered locus">At5g51710</name>
    <name evidence="11" type="ORF">MIO24.16</name>
</gene>
<feature type="signal peptide" evidence="1">
    <location>
        <begin position="1"/>
        <end position="20"/>
    </location>
</feature>
<feature type="chain" id="PRO_0000395101" description="K(+) efflux antiporter 5" evidence="1">
    <location>
        <begin position="21"/>
        <end position="568"/>
    </location>
</feature>
<feature type="transmembrane region" description="Helical" evidence="1">
    <location>
        <begin position="154"/>
        <end position="174"/>
    </location>
</feature>
<feature type="transmembrane region" description="Helical" evidence="1">
    <location>
        <begin position="178"/>
        <end position="198"/>
    </location>
</feature>
<feature type="transmembrane region" description="Helical" evidence="1">
    <location>
        <begin position="201"/>
        <end position="221"/>
    </location>
</feature>
<feature type="transmembrane region" description="Helical" evidence="1">
    <location>
        <begin position="230"/>
        <end position="250"/>
    </location>
</feature>
<feature type="transmembrane region" description="Helical" evidence="1">
    <location>
        <begin position="264"/>
        <end position="284"/>
    </location>
</feature>
<feature type="transmembrane region" description="Helical" evidence="1">
    <location>
        <begin position="298"/>
        <end position="318"/>
    </location>
</feature>
<feature type="transmembrane region" description="Helical" evidence="1">
    <location>
        <begin position="334"/>
        <end position="354"/>
    </location>
</feature>
<feature type="transmembrane region" description="Helical" evidence="1">
    <location>
        <begin position="389"/>
        <end position="409"/>
    </location>
</feature>
<feature type="transmembrane region" description="Helical" evidence="1">
    <location>
        <begin position="422"/>
        <end position="442"/>
    </location>
</feature>
<feature type="transmembrane region" description="Helical" evidence="1">
    <location>
        <begin position="447"/>
        <end position="467"/>
    </location>
</feature>
<feature type="transmembrane region" description="Helical" evidence="1">
    <location>
        <begin position="476"/>
        <end position="496"/>
    </location>
</feature>
<feature type="transmembrane region" description="Helical" evidence="1">
    <location>
        <begin position="510"/>
        <end position="530"/>
    </location>
</feature>
<feature type="region of interest" description="Disordered" evidence="2">
    <location>
        <begin position="59"/>
        <end position="78"/>
    </location>
</feature>
<name>KEA5_ARATH</name>
<comment type="function">
    <text evidence="3 4 5 6">Electroneutral K(+)/H(+) efflux antiporter involved in K(+) homeostasis and osmotic adjustment (PubMed:24278440, PubMed:30255504, PubMed:30309966, PubMed:31296940). Together with KEA4 and KEA6, promotes growth and development, and facilitates endosomal pH and ions homeostasis, as well as salt tolerance (e.g. K(+), NaCl and LiCl), probably by supporting cell wall biosynthesis during rapid etiolated seedling growth (PubMed:30255504, PubMed:30309966).</text>
</comment>
<comment type="catalytic activity">
    <reaction evidence="3 5 6">
        <text>K(+)(in) + H(+)(out) = K(+)(out) + H(+)(in)</text>
        <dbReference type="Rhea" id="RHEA:29467"/>
        <dbReference type="ChEBI" id="CHEBI:15378"/>
        <dbReference type="ChEBI" id="CHEBI:29103"/>
    </reaction>
</comment>
<comment type="biophysicochemical properties">
    <phDependence>
        <text evidence="3">Optimum pH is 5.8.</text>
    </phDependence>
</comment>
<comment type="subcellular location">
    <subcellularLocation>
        <location evidence="4 5">Golgi apparatus membrane</location>
        <topology evidence="1">Multi-pass membrane protein</topology>
    </subcellularLocation>
    <subcellularLocation>
        <location evidence="5">Golgi apparatus</location>
        <location evidence="5">trans-Golgi network membrane</location>
        <topology evidence="1">Multi-pass membrane protein</topology>
    </subcellularLocation>
    <subcellularLocation>
        <location evidence="5">Prevacuolar compartment membrane</location>
        <topology evidence="1">Multi-pass membrane protein</topology>
    </subcellularLocation>
    <subcellularLocation>
        <location evidence="5">Endomembrane system</location>
        <topology evidence="1">Multi-pass membrane protein</topology>
    </subcellularLocation>
</comment>
<comment type="alternative products">
    <event type="alternative splicing"/>
    <isoform>
        <id>Q8VYR9-1</id>
        <name>1</name>
        <sequence type="displayed"/>
    </isoform>
    <text>A number of isoforms are produced. According to EST sequences.</text>
</comment>
<comment type="tissue specificity">
    <text evidence="3 4 5">Expressed in roots, stems, leaves, flowers and silique.</text>
</comment>
<comment type="developmental stage">
    <text evidence="5">In roots, restricted to the vasculature and the tips of primary and secondary roots (PubMed:30309966). Also observed in the vascular bundles and tips of cotyledons, the base of true leaves, the ovarian stigma and pollen grains within the anthers, and the tip and base of the siliques (PubMed:30309966).</text>
</comment>
<comment type="induction">
    <text evidence="3">Up-regulated by osmotic stress.</text>
</comment>
<comment type="disruption phenotype">
    <text evidence="4 5">No visible phenotype (PubMed:30255504, PubMed:30309966). The triple mutant kea4 kea5 kea6 is compromised in cell wall biosynthesis and has a reduced growth, small rosettes and short seedlings, and is sensitive to low potassium K(+) availability and to high salinity (e.g. K(+), NaCl and LiCl); it also exhibits a reduced luminal pH in the Golgi, trans-Golgi network, prevacuolar compartment and vacuole (PubMed:30255504, PubMed:30309966). These phenotypes are partially suppressed by the cell wall-derived pectin homogalacturonan trigalacturonic GalA(3) in the dark but not in light conditions (PubMed:30255504).</text>
</comment>
<comment type="similarity">
    <text evidence="9">Belongs to the monovalent cation:proton antiporter 2 (CPA2) transporter (TC 2.A.37) family. KEA (TC 2.A.37.1) subfamily.</text>
</comment>
<comment type="sequence caution" evidence="9">
    <conflict type="erroneous gene model prediction">
        <sequence resource="EMBL-CDS" id="BAB11240"/>
    </conflict>
</comment>
<organism>
    <name type="scientific">Arabidopsis thaliana</name>
    <name type="common">Mouse-ear cress</name>
    <dbReference type="NCBI Taxonomy" id="3702"/>
    <lineage>
        <taxon>Eukaryota</taxon>
        <taxon>Viridiplantae</taxon>
        <taxon>Streptophyta</taxon>
        <taxon>Embryophyta</taxon>
        <taxon>Tracheophyta</taxon>
        <taxon>Spermatophyta</taxon>
        <taxon>Magnoliopsida</taxon>
        <taxon>eudicotyledons</taxon>
        <taxon>Gunneridae</taxon>
        <taxon>Pentapetalae</taxon>
        <taxon>rosids</taxon>
        <taxon>malvids</taxon>
        <taxon>Brassicales</taxon>
        <taxon>Brassicaceae</taxon>
        <taxon>Camelineae</taxon>
        <taxon>Arabidopsis</taxon>
    </lineage>
</organism>
<evidence type="ECO:0000255" key="1"/>
<evidence type="ECO:0000256" key="2">
    <source>
        <dbReference type="SAM" id="MobiDB-lite"/>
    </source>
</evidence>
<evidence type="ECO:0000269" key="3">
    <source>
    </source>
</evidence>
<evidence type="ECO:0000269" key="4">
    <source>
    </source>
</evidence>
<evidence type="ECO:0000269" key="5">
    <source>
    </source>
</evidence>
<evidence type="ECO:0000269" key="6">
    <source>
    </source>
</evidence>
<evidence type="ECO:0000303" key="7">
    <source>
    </source>
</evidence>
<evidence type="ECO:0000303" key="8">
    <source>
    </source>
</evidence>
<evidence type="ECO:0000305" key="9"/>
<evidence type="ECO:0000312" key="10">
    <source>
        <dbReference type="Araport" id="AT5G51710"/>
    </source>
</evidence>
<evidence type="ECO:0000312" key="11">
    <source>
        <dbReference type="EMBL" id="BAB11240.1"/>
    </source>
</evidence>
<dbReference type="EMBL" id="AB010074">
    <property type="protein sequence ID" value="BAB11240.1"/>
    <property type="status" value="ALT_SEQ"/>
    <property type="molecule type" value="Genomic_DNA"/>
</dbReference>
<dbReference type="EMBL" id="CP002688">
    <property type="protein sequence ID" value="AED96117.1"/>
    <property type="molecule type" value="Genomic_DNA"/>
</dbReference>
<dbReference type="EMBL" id="AY070064">
    <property type="protein sequence ID" value="AAL49821.1"/>
    <property type="molecule type" value="mRNA"/>
</dbReference>
<dbReference type="EMBL" id="AY084820">
    <property type="protein sequence ID" value="AAM61386.1"/>
    <property type="molecule type" value="mRNA"/>
</dbReference>
<dbReference type="RefSeq" id="NP_568763.1">
    <molecule id="Q8VYR9-1"/>
    <property type="nucleotide sequence ID" value="NM_124550.2"/>
</dbReference>
<dbReference type="SMR" id="Q8VYR9"/>
<dbReference type="FunCoup" id="Q8VYR9">
    <property type="interactions" value="1510"/>
</dbReference>
<dbReference type="STRING" id="3702.Q8VYR9"/>
<dbReference type="TCDB" id="2.A.37.1.8">
    <property type="family name" value="the monovalent cation:proton antiporter-2 (cpa2) family"/>
</dbReference>
<dbReference type="PaxDb" id="3702-AT5G51710.1"/>
<dbReference type="ProteomicsDB" id="237043">
    <molecule id="Q8VYR9-1"/>
</dbReference>
<dbReference type="EnsemblPlants" id="AT5G51710.1">
    <molecule id="Q8VYR9-1"/>
    <property type="protein sequence ID" value="AT5G51710.1"/>
    <property type="gene ID" value="AT5G51710"/>
</dbReference>
<dbReference type="GeneID" id="835245"/>
<dbReference type="Gramene" id="AT5G51710.1">
    <molecule id="Q8VYR9-1"/>
    <property type="protein sequence ID" value="AT5G51710.1"/>
    <property type="gene ID" value="AT5G51710"/>
</dbReference>
<dbReference type="KEGG" id="ath:AT5G51710"/>
<dbReference type="Araport" id="AT5G51710"/>
<dbReference type="TAIR" id="AT5G51710">
    <property type="gene designation" value="KEA5"/>
</dbReference>
<dbReference type="eggNOG" id="KOG1650">
    <property type="taxonomic scope" value="Eukaryota"/>
</dbReference>
<dbReference type="InParanoid" id="Q8VYR9"/>
<dbReference type="OrthoDB" id="1654420at2759"/>
<dbReference type="PhylomeDB" id="Q8VYR9"/>
<dbReference type="PRO" id="PR:Q8VYR9"/>
<dbReference type="Proteomes" id="UP000006548">
    <property type="component" value="Chromosome 5"/>
</dbReference>
<dbReference type="ExpressionAtlas" id="Q8VYR9">
    <property type="expression patterns" value="baseline and differential"/>
</dbReference>
<dbReference type="GO" id="GO:0000139">
    <property type="term" value="C:Golgi membrane"/>
    <property type="evidence" value="ECO:0007669"/>
    <property type="project" value="UniProtKB-SubCell"/>
</dbReference>
<dbReference type="GO" id="GO:0015386">
    <property type="term" value="F:potassium:proton antiporter activity"/>
    <property type="evidence" value="ECO:0007669"/>
    <property type="project" value="InterPro"/>
</dbReference>
<dbReference type="Gene3D" id="1.20.1530.20">
    <property type="match status" value="1"/>
</dbReference>
<dbReference type="InterPro" id="IPR006153">
    <property type="entry name" value="Cation/H_exchanger_TM"/>
</dbReference>
<dbReference type="InterPro" id="IPR045158">
    <property type="entry name" value="KEA4/5/6-like"/>
</dbReference>
<dbReference type="InterPro" id="IPR038770">
    <property type="entry name" value="Na+/solute_symporter_sf"/>
</dbReference>
<dbReference type="PANTHER" id="PTHR16254:SF20">
    <property type="entry name" value="K(+) EFFLUX ANTIPORTER 5"/>
    <property type="match status" value="1"/>
</dbReference>
<dbReference type="PANTHER" id="PTHR16254">
    <property type="entry name" value="POTASSIUM/PROTON ANTIPORTER-RELATED"/>
    <property type="match status" value="1"/>
</dbReference>
<dbReference type="Pfam" id="PF00999">
    <property type="entry name" value="Na_H_Exchanger"/>
    <property type="match status" value="1"/>
</dbReference>